<reference key="1">
    <citation type="journal article" date="1992" name="J. Bacteriol.">
        <title>Nucleotide sequences of Bacillus subtilis flagellar biosynthetic genes fliP and fliQ and identification of a novel flagellar gene, fliZ.</title>
        <authorList>
            <person name="Bischoff D.S."/>
            <person name="Weinreich M.D."/>
            <person name="Ordal G.W."/>
        </authorList>
    </citation>
    <scope>NUCLEOTIDE SEQUENCE [GENOMIC DNA]</scope>
    <source>
        <strain>168 / OI1085</strain>
    </source>
</reference>
<reference key="2">
    <citation type="journal article" date="1997" name="Nature">
        <title>The complete genome sequence of the Gram-positive bacterium Bacillus subtilis.</title>
        <authorList>
            <person name="Kunst F."/>
            <person name="Ogasawara N."/>
            <person name="Moszer I."/>
            <person name="Albertini A.M."/>
            <person name="Alloni G."/>
            <person name="Azevedo V."/>
            <person name="Bertero M.G."/>
            <person name="Bessieres P."/>
            <person name="Bolotin A."/>
            <person name="Borchert S."/>
            <person name="Borriss R."/>
            <person name="Boursier L."/>
            <person name="Brans A."/>
            <person name="Braun M."/>
            <person name="Brignell S.C."/>
            <person name="Bron S."/>
            <person name="Brouillet S."/>
            <person name="Bruschi C.V."/>
            <person name="Caldwell B."/>
            <person name="Capuano V."/>
            <person name="Carter N.M."/>
            <person name="Choi S.-K."/>
            <person name="Codani J.-J."/>
            <person name="Connerton I.F."/>
            <person name="Cummings N.J."/>
            <person name="Daniel R.A."/>
            <person name="Denizot F."/>
            <person name="Devine K.M."/>
            <person name="Duesterhoeft A."/>
            <person name="Ehrlich S.D."/>
            <person name="Emmerson P.T."/>
            <person name="Entian K.-D."/>
            <person name="Errington J."/>
            <person name="Fabret C."/>
            <person name="Ferrari E."/>
            <person name="Foulger D."/>
            <person name="Fritz C."/>
            <person name="Fujita M."/>
            <person name="Fujita Y."/>
            <person name="Fuma S."/>
            <person name="Galizzi A."/>
            <person name="Galleron N."/>
            <person name="Ghim S.-Y."/>
            <person name="Glaser P."/>
            <person name="Goffeau A."/>
            <person name="Golightly E.J."/>
            <person name="Grandi G."/>
            <person name="Guiseppi G."/>
            <person name="Guy B.J."/>
            <person name="Haga K."/>
            <person name="Haiech J."/>
            <person name="Harwood C.R."/>
            <person name="Henaut A."/>
            <person name="Hilbert H."/>
            <person name="Holsappel S."/>
            <person name="Hosono S."/>
            <person name="Hullo M.-F."/>
            <person name="Itaya M."/>
            <person name="Jones L.-M."/>
            <person name="Joris B."/>
            <person name="Karamata D."/>
            <person name="Kasahara Y."/>
            <person name="Klaerr-Blanchard M."/>
            <person name="Klein C."/>
            <person name="Kobayashi Y."/>
            <person name="Koetter P."/>
            <person name="Koningstein G."/>
            <person name="Krogh S."/>
            <person name="Kumano M."/>
            <person name="Kurita K."/>
            <person name="Lapidus A."/>
            <person name="Lardinois S."/>
            <person name="Lauber J."/>
            <person name="Lazarevic V."/>
            <person name="Lee S.-M."/>
            <person name="Levine A."/>
            <person name="Liu H."/>
            <person name="Masuda S."/>
            <person name="Mauel C."/>
            <person name="Medigue C."/>
            <person name="Medina N."/>
            <person name="Mellado R.P."/>
            <person name="Mizuno M."/>
            <person name="Moestl D."/>
            <person name="Nakai S."/>
            <person name="Noback M."/>
            <person name="Noone D."/>
            <person name="O'Reilly M."/>
            <person name="Ogawa K."/>
            <person name="Ogiwara A."/>
            <person name="Oudega B."/>
            <person name="Park S.-H."/>
            <person name="Parro V."/>
            <person name="Pohl T.M."/>
            <person name="Portetelle D."/>
            <person name="Porwollik S."/>
            <person name="Prescott A.M."/>
            <person name="Presecan E."/>
            <person name="Pujic P."/>
            <person name="Purnelle B."/>
            <person name="Rapoport G."/>
            <person name="Rey M."/>
            <person name="Reynolds S."/>
            <person name="Rieger M."/>
            <person name="Rivolta C."/>
            <person name="Rocha E."/>
            <person name="Roche B."/>
            <person name="Rose M."/>
            <person name="Sadaie Y."/>
            <person name="Sato T."/>
            <person name="Scanlan E."/>
            <person name="Schleich S."/>
            <person name="Schroeter R."/>
            <person name="Scoffone F."/>
            <person name="Sekiguchi J."/>
            <person name="Sekowska A."/>
            <person name="Seror S.J."/>
            <person name="Serror P."/>
            <person name="Shin B.-S."/>
            <person name="Soldo B."/>
            <person name="Sorokin A."/>
            <person name="Tacconi E."/>
            <person name="Takagi T."/>
            <person name="Takahashi H."/>
            <person name="Takemaru K."/>
            <person name="Takeuchi M."/>
            <person name="Tamakoshi A."/>
            <person name="Tanaka T."/>
            <person name="Terpstra P."/>
            <person name="Tognoni A."/>
            <person name="Tosato V."/>
            <person name="Uchiyama S."/>
            <person name="Vandenbol M."/>
            <person name="Vannier F."/>
            <person name="Vassarotti A."/>
            <person name="Viari A."/>
            <person name="Wambutt R."/>
            <person name="Wedler E."/>
            <person name="Wedler H."/>
            <person name="Weitzenegger T."/>
            <person name="Winters P."/>
            <person name="Wipat A."/>
            <person name="Yamamoto H."/>
            <person name="Yamane K."/>
            <person name="Yasumoto K."/>
            <person name="Yata K."/>
            <person name="Yoshida K."/>
            <person name="Yoshikawa H.-F."/>
            <person name="Zumstein E."/>
            <person name="Yoshikawa H."/>
            <person name="Danchin A."/>
        </authorList>
    </citation>
    <scope>NUCLEOTIDE SEQUENCE [LARGE SCALE GENOMIC DNA]</scope>
    <source>
        <strain>168</strain>
    </source>
</reference>
<sequence>MSSEFVISMAEKAVYVTLMISGPLLAIALLVGLIVSIFQATTQIQEQTLAFIPKIVAVLLALIFFGPWMLSTILSFTTELFSNLNRFAG</sequence>
<accession>P35535</accession>
<organism>
    <name type="scientific">Bacillus subtilis (strain 168)</name>
    <dbReference type="NCBI Taxonomy" id="224308"/>
    <lineage>
        <taxon>Bacteria</taxon>
        <taxon>Bacillati</taxon>
        <taxon>Bacillota</taxon>
        <taxon>Bacilli</taxon>
        <taxon>Bacillales</taxon>
        <taxon>Bacillaceae</taxon>
        <taxon>Bacillus</taxon>
    </lineage>
</organism>
<evidence type="ECO:0000250" key="1"/>
<evidence type="ECO:0000255" key="2"/>
<evidence type="ECO:0000305" key="3"/>
<proteinExistence type="inferred from homology"/>
<comment type="function">
    <text>Role in flagellar biosynthesis.</text>
</comment>
<comment type="subcellular location">
    <subcellularLocation>
        <location evidence="3">Cell membrane</location>
        <topology evidence="3">Multi-pass membrane protein</topology>
    </subcellularLocation>
    <subcellularLocation>
        <location evidence="1">Bacterial flagellum basal body</location>
    </subcellularLocation>
</comment>
<comment type="similarity">
    <text evidence="3">Belongs to the FliQ/MopD/SpaQ family.</text>
</comment>
<keyword id="KW-0975">Bacterial flagellum</keyword>
<keyword id="KW-1003">Cell membrane</keyword>
<keyword id="KW-0472">Membrane</keyword>
<keyword id="KW-1185">Reference proteome</keyword>
<keyword id="KW-0812">Transmembrane</keyword>
<keyword id="KW-1133">Transmembrane helix</keyword>
<dbReference type="EMBL" id="M87005">
    <property type="protein sequence ID" value="AAA22454.1"/>
    <property type="molecule type" value="Genomic_DNA"/>
</dbReference>
<dbReference type="EMBL" id="AL009126">
    <property type="protein sequence ID" value="CAB13509.1"/>
    <property type="molecule type" value="Genomic_DNA"/>
</dbReference>
<dbReference type="PIR" id="D41886">
    <property type="entry name" value="D41886"/>
</dbReference>
<dbReference type="RefSeq" id="NP_389518.1">
    <property type="nucleotide sequence ID" value="NC_000964.3"/>
</dbReference>
<dbReference type="RefSeq" id="WP_003220888.1">
    <property type="nucleotide sequence ID" value="NZ_OZ025638.1"/>
</dbReference>
<dbReference type="SMR" id="P35535"/>
<dbReference type="FunCoup" id="P35535">
    <property type="interactions" value="161"/>
</dbReference>
<dbReference type="STRING" id="224308.BSU16360"/>
<dbReference type="PaxDb" id="224308-BSU16360"/>
<dbReference type="EnsemblBacteria" id="CAB13509">
    <property type="protein sequence ID" value="CAB13509"/>
    <property type="gene ID" value="BSU_16360"/>
</dbReference>
<dbReference type="GeneID" id="86873854"/>
<dbReference type="GeneID" id="939623"/>
<dbReference type="KEGG" id="bsu:BSU16360"/>
<dbReference type="PATRIC" id="fig|224308.179.peg.1777"/>
<dbReference type="eggNOG" id="COG1987">
    <property type="taxonomic scope" value="Bacteria"/>
</dbReference>
<dbReference type="InParanoid" id="P35535"/>
<dbReference type="OrthoDB" id="9806440at2"/>
<dbReference type="PhylomeDB" id="P35535"/>
<dbReference type="BioCyc" id="BSUB:BSU16360-MONOMER"/>
<dbReference type="Proteomes" id="UP000001570">
    <property type="component" value="Chromosome"/>
</dbReference>
<dbReference type="GO" id="GO:0009425">
    <property type="term" value="C:bacterial-type flagellum basal body"/>
    <property type="evidence" value="ECO:0007669"/>
    <property type="project" value="UniProtKB-SubCell"/>
</dbReference>
<dbReference type="GO" id="GO:0005886">
    <property type="term" value="C:plasma membrane"/>
    <property type="evidence" value="ECO:0007669"/>
    <property type="project" value="UniProtKB-SubCell"/>
</dbReference>
<dbReference type="GO" id="GO:0044780">
    <property type="term" value="P:bacterial-type flagellum assembly"/>
    <property type="evidence" value="ECO:0000315"/>
    <property type="project" value="CACAO"/>
</dbReference>
<dbReference type="GO" id="GO:0071978">
    <property type="term" value="P:bacterial-type flagellum-dependent swarming motility"/>
    <property type="evidence" value="ECO:0000315"/>
    <property type="project" value="CACAO"/>
</dbReference>
<dbReference type="GO" id="GO:0009306">
    <property type="term" value="P:protein secretion"/>
    <property type="evidence" value="ECO:0007669"/>
    <property type="project" value="InterPro"/>
</dbReference>
<dbReference type="InterPro" id="IPR002191">
    <property type="entry name" value="Bac_export_3"/>
</dbReference>
<dbReference type="InterPro" id="IPR006305">
    <property type="entry name" value="FliQ"/>
</dbReference>
<dbReference type="NCBIfam" id="TIGR01402">
    <property type="entry name" value="fliQ"/>
    <property type="match status" value="1"/>
</dbReference>
<dbReference type="PANTHER" id="PTHR34040">
    <property type="entry name" value="FLAGELLAR BIOSYNTHETIC PROTEIN FLIQ"/>
    <property type="match status" value="1"/>
</dbReference>
<dbReference type="PANTHER" id="PTHR34040:SF2">
    <property type="entry name" value="FLAGELLAR BIOSYNTHETIC PROTEIN FLIQ"/>
    <property type="match status" value="1"/>
</dbReference>
<dbReference type="Pfam" id="PF01313">
    <property type="entry name" value="Bac_export_3"/>
    <property type="match status" value="1"/>
</dbReference>
<dbReference type="PIRSF" id="PIRSF004669">
    <property type="entry name" value="FliQ"/>
    <property type="match status" value="1"/>
</dbReference>
<dbReference type="PRINTS" id="PR00952">
    <property type="entry name" value="TYPE3IMQPROT"/>
</dbReference>
<name>FLIQ_BACSU</name>
<protein>
    <recommendedName>
        <fullName>Flagellar biosynthetic protein FliQ</fullName>
    </recommendedName>
</protein>
<gene>
    <name type="primary">fliQ</name>
    <name type="ordered locus">BSU16360</name>
</gene>
<feature type="chain" id="PRO_0000129087" description="Flagellar biosynthetic protein FliQ">
    <location>
        <begin position="1"/>
        <end position="89"/>
    </location>
</feature>
<feature type="transmembrane region" description="Helical" evidence="2">
    <location>
        <begin position="18"/>
        <end position="38"/>
    </location>
</feature>
<feature type="transmembrane region" description="Helical" evidence="2">
    <location>
        <begin position="55"/>
        <end position="75"/>
    </location>
</feature>